<proteinExistence type="inferred from homology"/>
<keyword id="KW-0067">ATP-binding</keyword>
<keyword id="KW-0963">Cytoplasm</keyword>
<keyword id="KW-0418">Kinase</keyword>
<keyword id="KW-0460">Magnesium</keyword>
<keyword id="KW-0479">Metal-binding</keyword>
<keyword id="KW-0546">Nucleotide metabolism</keyword>
<keyword id="KW-0547">Nucleotide-binding</keyword>
<keyword id="KW-0597">Phosphoprotein</keyword>
<keyword id="KW-0808">Transferase</keyword>
<evidence type="ECO:0000255" key="1">
    <source>
        <dbReference type="HAMAP-Rule" id="MF_00451"/>
    </source>
</evidence>
<protein>
    <recommendedName>
        <fullName evidence="1">Nucleoside diphosphate kinase</fullName>
        <shortName evidence="1">NDK</shortName>
        <shortName evidence="1">NDP kinase</shortName>
        <ecNumber evidence="1">2.7.4.6</ecNumber>
    </recommendedName>
    <alternativeName>
        <fullName evidence="1">Nucleoside-2-P kinase</fullName>
    </alternativeName>
</protein>
<feature type="chain" id="PRO_1000026311" description="Nucleoside diphosphate kinase">
    <location>
        <begin position="1"/>
        <end position="141"/>
    </location>
</feature>
<feature type="active site" description="Pros-phosphohistidine intermediate" evidence="1">
    <location>
        <position position="117"/>
    </location>
</feature>
<feature type="binding site" evidence="1">
    <location>
        <position position="11"/>
    </location>
    <ligand>
        <name>ATP</name>
        <dbReference type="ChEBI" id="CHEBI:30616"/>
    </ligand>
</feature>
<feature type="binding site" evidence="1">
    <location>
        <position position="59"/>
    </location>
    <ligand>
        <name>ATP</name>
        <dbReference type="ChEBI" id="CHEBI:30616"/>
    </ligand>
</feature>
<feature type="binding site" evidence="1">
    <location>
        <position position="87"/>
    </location>
    <ligand>
        <name>ATP</name>
        <dbReference type="ChEBI" id="CHEBI:30616"/>
    </ligand>
</feature>
<feature type="binding site" evidence="1">
    <location>
        <position position="93"/>
    </location>
    <ligand>
        <name>ATP</name>
        <dbReference type="ChEBI" id="CHEBI:30616"/>
    </ligand>
</feature>
<feature type="binding site" evidence="1">
    <location>
        <position position="104"/>
    </location>
    <ligand>
        <name>ATP</name>
        <dbReference type="ChEBI" id="CHEBI:30616"/>
    </ligand>
</feature>
<feature type="binding site" evidence="1">
    <location>
        <position position="114"/>
    </location>
    <ligand>
        <name>ATP</name>
        <dbReference type="ChEBI" id="CHEBI:30616"/>
    </ligand>
</feature>
<sequence>MAVERTFSIIKPNAVAKNNIGAIYARFESAGFKIIAAKMLHLTKEQAEGFYAEHKGRPFFDGLVEFMTSGPVMIQVLEGENAVQRHRDIMGATNPDNALAGTLRADFADSFTENAVHGSDAVESAQREIAYFFSENEICPR</sequence>
<accession>A1JKR7</accession>
<gene>
    <name evidence="1" type="primary">ndk</name>
    <name type="ordered locus">YE1069</name>
</gene>
<dbReference type="EC" id="2.7.4.6" evidence="1"/>
<dbReference type="EMBL" id="AM286415">
    <property type="protein sequence ID" value="CAL11166.1"/>
    <property type="molecule type" value="Genomic_DNA"/>
</dbReference>
<dbReference type="RefSeq" id="WP_005172605.1">
    <property type="nucleotide sequence ID" value="NC_008800.1"/>
</dbReference>
<dbReference type="RefSeq" id="YP_001005401.1">
    <property type="nucleotide sequence ID" value="NC_008800.1"/>
</dbReference>
<dbReference type="SMR" id="A1JKR7"/>
<dbReference type="KEGG" id="yen:YE1069"/>
<dbReference type="PATRIC" id="fig|393305.7.peg.1166"/>
<dbReference type="eggNOG" id="COG0105">
    <property type="taxonomic scope" value="Bacteria"/>
</dbReference>
<dbReference type="HOGENOM" id="CLU_060216_8_1_6"/>
<dbReference type="OrthoDB" id="9801161at2"/>
<dbReference type="Proteomes" id="UP000000642">
    <property type="component" value="Chromosome"/>
</dbReference>
<dbReference type="GO" id="GO:0005737">
    <property type="term" value="C:cytoplasm"/>
    <property type="evidence" value="ECO:0007669"/>
    <property type="project" value="UniProtKB-SubCell"/>
</dbReference>
<dbReference type="GO" id="GO:0005524">
    <property type="term" value="F:ATP binding"/>
    <property type="evidence" value="ECO:0007669"/>
    <property type="project" value="UniProtKB-UniRule"/>
</dbReference>
<dbReference type="GO" id="GO:0046872">
    <property type="term" value="F:metal ion binding"/>
    <property type="evidence" value="ECO:0007669"/>
    <property type="project" value="UniProtKB-KW"/>
</dbReference>
<dbReference type="GO" id="GO:0004550">
    <property type="term" value="F:nucleoside diphosphate kinase activity"/>
    <property type="evidence" value="ECO:0007669"/>
    <property type="project" value="UniProtKB-UniRule"/>
</dbReference>
<dbReference type="GO" id="GO:0006241">
    <property type="term" value="P:CTP biosynthetic process"/>
    <property type="evidence" value="ECO:0007669"/>
    <property type="project" value="UniProtKB-UniRule"/>
</dbReference>
<dbReference type="GO" id="GO:0006183">
    <property type="term" value="P:GTP biosynthetic process"/>
    <property type="evidence" value="ECO:0007669"/>
    <property type="project" value="UniProtKB-UniRule"/>
</dbReference>
<dbReference type="GO" id="GO:0006228">
    <property type="term" value="P:UTP biosynthetic process"/>
    <property type="evidence" value="ECO:0007669"/>
    <property type="project" value="UniProtKB-UniRule"/>
</dbReference>
<dbReference type="CDD" id="cd04413">
    <property type="entry name" value="NDPk_I"/>
    <property type="match status" value="1"/>
</dbReference>
<dbReference type="FunFam" id="3.30.70.141:FF:000001">
    <property type="entry name" value="Nucleoside diphosphate kinase"/>
    <property type="match status" value="1"/>
</dbReference>
<dbReference type="Gene3D" id="3.30.70.141">
    <property type="entry name" value="Nucleoside diphosphate kinase-like domain"/>
    <property type="match status" value="1"/>
</dbReference>
<dbReference type="HAMAP" id="MF_00451">
    <property type="entry name" value="NDP_kinase"/>
    <property type="match status" value="1"/>
</dbReference>
<dbReference type="InterPro" id="IPR034907">
    <property type="entry name" value="NDK-like_dom"/>
</dbReference>
<dbReference type="InterPro" id="IPR036850">
    <property type="entry name" value="NDK-like_dom_sf"/>
</dbReference>
<dbReference type="InterPro" id="IPR001564">
    <property type="entry name" value="Nucleoside_diP_kinase"/>
</dbReference>
<dbReference type="InterPro" id="IPR023005">
    <property type="entry name" value="Nucleoside_diP_kinase_AS"/>
</dbReference>
<dbReference type="NCBIfam" id="NF001908">
    <property type="entry name" value="PRK00668.1"/>
    <property type="match status" value="1"/>
</dbReference>
<dbReference type="PANTHER" id="PTHR46161">
    <property type="entry name" value="NUCLEOSIDE DIPHOSPHATE KINASE"/>
    <property type="match status" value="1"/>
</dbReference>
<dbReference type="PANTHER" id="PTHR46161:SF3">
    <property type="entry name" value="NUCLEOSIDE DIPHOSPHATE KINASE DDB_G0292928-RELATED"/>
    <property type="match status" value="1"/>
</dbReference>
<dbReference type="Pfam" id="PF00334">
    <property type="entry name" value="NDK"/>
    <property type="match status" value="1"/>
</dbReference>
<dbReference type="PRINTS" id="PR01243">
    <property type="entry name" value="NUCDPKINASE"/>
</dbReference>
<dbReference type="SMART" id="SM00562">
    <property type="entry name" value="NDK"/>
    <property type="match status" value="1"/>
</dbReference>
<dbReference type="SUPFAM" id="SSF54919">
    <property type="entry name" value="Nucleoside diphosphate kinase, NDK"/>
    <property type="match status" value="1"/>
</dbReference>
<dbReference type="PROSITE" id="PS00469">
    <property type="entry name" value="NDPK"/>
    <property type="match status" value="1"/>
</dbReference>
<dbReference type="PROSITE" id="PS51374">
    <property type="entry name" value="NDPK_LIKE"/>
    <property type="match status" value="1"/>
</dbReference>
<reference key="1">
    <citation type="journal article" date="2006" name="PLoS Genet.">
        <title>The complete genome sequence and comparative genome analysis of the high pathogenicity Yersinia enterocolitica strain 8081.</title>
        <authorList>
            <person name="Thomson N.R."/>
            <person name="Howard S."/>
            <person name="Wren B.W."/>
            <person name="Holden M.T.G."/>
            <person name="Crossman L."/>
            <person name="Challis G.L."/>
            <person name="Churcher C."/>
            <person name="Mungall K."/>
            <person name="Brooks K."/>
            <person name="Chillingworth T."/>
            <person name="Feltwell T."/>
            <person name="Abdellah Z."/>
            <person name="Hauser H."/>
            <person name="Jagels K."/>
            <person name="Maddison M."/>
            <person name="Moule S."/>
            <person name="Sanders M."/>
            <person name="Whitehead S."/>
            <person name="Quail M.A."/>
            <person name="Dougan G."/>
            <person name="Parkhill J."/>
            <person name="Prentice M.B."/>
        </authorList>
    </citation>
    <scope>NUCLEOTIDE SEQUENCE [LARGE SCALE GENOMIC DNA]</scope>
    <source>
        <strain>NCTC 13174 / 8081</strain>
    </source>
</reference>
<name>NDK_YERE8</name>
<comment type="function">
    <text evidence="1">Major role in the synthesis of nucleoside triphosphates other than ATP. The ATP gamma phosphate is transferred to the NDP beta phosphate via a ping-pong mechanism, using a phosphorylated active-site intermediate.</text>
</comment>
<comment type="catalytic activity">
    <reaction evidence="1">
        <text>a 2'-deoxyribonucleoside 5'-diphosphate + ATP = a 2'-deoxyribonucleoside 5'-triphosphate + ADP</text>
        <dbReference type="Rhea" id="RHEA:44640"/>
        <dbReference type="ChEBI" id="CHEBI:30616"/>
        <dbReference type="ChEBI" id="CHEBI:61560"/>
        <dbReference type="ChEBI" id="CHEBI:73316"/>
        <dbReference type="ChEBI" id="CHEBI:456216"/>
        <dbReference type="EC" id="2.7.4.6"/>
    </reaction>
</comment>
<comment type="catalytic activity">
    <reaction evidence="1">
        <text>a ribonucleoside 5'-diphosphate + ATP = a ribonucleoside 5'-triphosphate + ADP</text>
        <dbReference type="Rhea" id="RHEA:18113"/>
        <dbReference type="ChEBI" id="CHEBI:30616"/>
        <dbReference type="ChEBI" id="CHEBI:57930"/>
        <dbReference type="ChEBI" id="CHEBI:61557"/>
        <dbReference type="ChEBI" id="CHEBI:456216"/>
        <dbReference type="EC" id="2.7.4.6"/>
    </reaction>
</comment>
<comment type="cofactor">
    <cofactor evidence="1">
        <name>Mg(2+)</name>
        <dbReference type="ChEBI" id="CHEBI:18420"/>
    </cofactor>
</comment>
<comment type="subunit">
    <text evidence="1">Homotetramer.</text>
</comment>
<comment type="subcellular location">
    <subcellularLocation>
        <location evidence="1">Cytoplasm</location>
    </subcellularLocation>
</comment>
<comment type="similarity">
    <text evidence="1">Belongs to the NDK family.</text>
</comment>
<organism>
    <name type="scientific">Yersinia enterocolitica serotype O:8 / biotype 1B (strain NCTC 13174 / 8081)</name>
    <dbReference type="NCBI Taxonomy" id="393305"/>
    <lineage>
        <taxon>Bacteria</taxon>
        <taxon>Pseudomonadati</taxon>
        <taxon>Pseudomonadota</taxon>
        <taxon>Gammaproteobacteria</taxon>
        <taxon>Enterobacterales</taxon>
        <taxon>Yersiniaceae</taxon>
        <taxon>Yersinia</taxon>
    </lineage>
</organism>